<accession>C1C8C3</accession>
<organism>
    <name type="scientific">Streptococcus pneumoniae (strain 70585)</name>
    <dbReference type="NCBI Taxonomy" id="488221"/>
    <lineage>
        <taxon>Bacteria</taxon>
        <taxon>Bacillati</taxon>
        <taxon>Bacillota</taxon>
        <taxon>Bacilli</taxon>
        <taxon>Lactobacillales</taxon>
        <taxon>Streptococcaceae</taxon>
        <taxon>Streptococcus</taxon>
    </lineage>
</organism>
<keyword id="KW-0963">Cytoplasm</keyword>
<keyword id="KW-0378">Hydrolase</keyword>
<keyword id="KW-0464">Manganese</keyword>
<keyword id="KW-0479">Metal-binding</keyword>
<reference key="1">
    <citation type="journal article" date="2010" name="Genome Biol.">
        <title>Structure and dynamics of the pan-genome of Streptococcus pneumoniae and closely related species.</title>
        <authorList>
            <person name="Donati C."/>
            <person name="Hiller N.L."/>
            <person name="Tettelin H."/>
            <person name="Muzzi A."/>
            <person name="Croucher N.J."/>
            <person name="Angiuoli S.V."/>
            <person name="Oggioni M."/>
            <person name="Dunning Hotopp J.C."/>
            <person name="Hu F.Z."/>
            <person name="Riley D.R."/>
            <person name="Covacci A."/>
            <person name="Mitchell T.J."/>
            <person name="Bentley S.D."/>
            <person name="Kilian M."/>
            <person name="Ehrlich G.D."/>
            <person name="Rappuoli R."/>
            <person name="Moxon E.R."/>
            <person name="Masignani V."/>
        </authorList>
    </citation>
    <scope>NUCLEOTIDE SEQUENCE [LARGE SCALE GENOMIC DNA]</scope>
    <source>
        <strain>70585</strain>
    </source>
</reference>
<feature type="chain" id="PRO_1000124659" description="Probable manganese-dependent inorganic pyrophosphatase">
    <location>
        <begin position="1"/>
        <end position="311"/>
    </location>
</feature>
<feature type="binding site" evidence="1">
    <location>
        <position position="9"/>
    </location>
    <ligand>
        <name>Mn(2+)</name>
        <dbReference type="ChEBI" id="CHEBI:29035"/>
        <label>1</label>
    </ligand>
</feature>
<feature type="binding site" evidence="1">
    <location>
        <position position="13"/>
    </location>
    <ligand>
        <name>Mn(2+)</name>
        <dbReference type="ChEBI" id="CHEBI:29035"/>
        <label>1</label>
    </ligand>
</feature>
<feature type="binding site" evidence="1">
    <location>
        <position position="15"/>
    </location>
    <ligand>
        <name>Mn(2+)</name>
        <dbReference type="ChEBI" id="CHEBI:29035"/>
        <label>2</label>
    </ligand>
</feature>
<feature type="binding site" evidence="1">
    <location>
        <position position="77"/>
    </location>
    <ligand>
        <name>Mn(2+)</name>
        <dbReference type="ChEBI" id="CHEBI:29035"/>
        <label>1</label>
    </ligand>
</feature>
<feature type="binding site" evidence="1">
    <location>
        <position position="77"/>
    </location>
    <ligand>
        <name>Mn(2+)</name>
        <dbReference type="ChEBI" id="CHEBI:29035"/>
        <label>2</label>
    </ligand>
</feature>
<feature type="binding site" evidence="1">
    <location>
        <position position="99"/>
    </location>
    <ligand>
        <name>Mn(2+)</name>
        <dbReference type="ChEBI" id="CHEBI:29035"/>
        <label>2</label>
    </ligand>
</feature>
<feature type="binding site" evidence="1">
    <location>
        <position position="151"/>
    </location>
    <ligand>
        <name>Mn(2+)</name>
        <dbReference type="ChEBI" id="CHEBI:29035"/>
        <label>2</label>
    </ligand>
</feature>
<evidence type="ECO:0000255" key="1">
    <source>
        <dbReference type="HAMAP-Rule" id="MF_00207"/>
    </source>
</evidence>
<proteinExistence type="inferred from homology"/>
<comment type="catalytic activity">
    <reaction evidence="1">
        <text>diphosphate + H2O = 2 phosphate + H(+)</text>
        <dbReference type="Rhea" id="RHEA:24576"/>
        <dbReference type="ChEBI" id="CHEBI:15377"/>
        <dbReference type="ChEBI" id="CHEBI:15378"/>
        <dbReference type="ChEBI" id="CHEBI:33019"/>
        <dbReference type="ChEBI" id="CHEBI:43474"/>
        <dbReference type="EC" id="3.6.1.1"/>
    </reaction>
</comment>
<comment type="cofactor">
    <cofactor evidence="1">
        <name>Mn(2+)</name>
        <dbReference type="ChEBI" id="CHEBI:29035"/>
    </cofactor>
    <text evidence="1">Binds 2 manganese ions per subunit.</text>
</comment>
<comment type="subcellular location">
    <subcellularLocation>
        <location evidence="1">Cytoplasm</location>
    </subcellularLocation>
</comment>
<comment type="similarity">
    <text evidence="1">Belongs to the PPase class C family.</text>
</comment>
<name>PPAC_STRP7</name>
<protein>
    <recommendedName>
        <fullName evidence="1">Probable manganese-dependent inorganic pyrophosphatase</fullName>
        <ecNumber evidence="1">3.6.1.1</ecNumber>
    </recommendedName>
    <alternativeName>
        <fullName evidence="1">Pyrophosphate phospho-hydrolase</fullName>
        <shortName evidence="1">PPase</shortName>
    </alternativeName>
</protein>
<gene>
    <name evidence="1" type="primary">ppaC</name>
    <name type="ordered locus">SP70585_1573</name>
</gene>
<sequence>MSKILVFGHQNPDSDAIGSSVAFAYLAKEAYGLDTEAVALGTPNEETAFVLNYFGVEAPRVITSAKAEGAEQVILTDHNEFQQSVSDIAEVEVYGVVDHHRVANFETASPLYMRLEPVGSASSIVYRMFKEHGVAVPKEIAGLMLSGLISDTLLLKSPTTHPTDKIIAPELAELAGVNLEEYGLAMLKAGTNLASKSAEELIDIDAKTFELNGNNVRVAQVNTVDIAEVLERQAEIEAAMQAANESNGYSDFVLMITDIVNSNSEILALGANMDKVEAAFNFKLENNHAFLAGAVSRKKQVVPQLTESFNA</sequence>
<dbReference type="EC" id="3.6.1.1" evidence="1"/>
<dbReference type="EMBL" id="CP000918">
    <property type="protein sequence ID" value="ACO17315.1"/>
    <property type="molecule type" value="Genomic_DNA"/>
</dbReference>
<dbReference type="RefSeq" id="WP_000036043.1">
    <property type="nucleotide sequence ID" value="NC_012468.1"/>
</dbReference>
<dbReference type="SMR" id="C1C8C3"/>
<dbReference type="KEGG" id="snm:SP70585_1573"/>
<dbReference type="HOGENOM" id="CLU_025243_0_1_9"/>
<dbReference type="Proteomes" id="UP000002211">
    <property type="component" value="Chromosome"/>
</dbReference>
<dbReference type="GO" id="GO:0005737">
    <property type="term" value="C:cytoplasm"/>
    <property type="evidence" value="ECO:0007669"/>
    <property type="project" value="UniProtKB-SubCell"/>
</dbReference>
<dbReference type="GO" id="GO:0004427">
    <property type="term" value="F:inorganic diphosphate phosphatase activity"/>
    <property type="evidence" value="ECO:0007669"/>
    <property type="project" value="UniProtKB-UniRule"/>
</dbReference>
<dbReference type="GO" id="GO:0030145">
    <property type="term" value="F:manganese ion binding"/>
    <property type="evidence" value="ECO:0007669"/>
    <property type="project" value="UniProtKB-UniRule"/>
</dbReference>
<dbReference type="FunFam" id="3.10.310.20:FF:000001">
    <property type="entry name" value="Probable manganese-dependent inorganic pyrophosphatase"/>
    <property type="match status" value="1"/>
</dbReference>
<dbReference type="FunFam" id="3.90.1640.10:FF:000001">
    <property type="entry name" value="Probable manganese-dependent inorganic pyrophosphatase"/>
    <property type="match status" value="1"/>
</dbReference>
<dbReference type="Gene3D" id="3.10.310.20">
    <property type="entry name" value="DHHA2 domain"/>
    <property type="match status" value="1"/>
</dbReference>
<dbReference type="Gene3D" id="3.90.1640.10">
    <property type="entry name" value="inorganic pyrophosphatase (n-terminal core)"/>
    <property type="match status" value="1"/>
</dbReference>
<dbReference type="HAMAP" id="MF_00207">
    <property type="entry name" value="PPase_C"/>
    <property type="match status" value="1"/>
</dbReference>
<dbReference type="InterPro" id="IPR001667">
    <property type="entry name" value="DDH_dom"/>
</dbReference>
<dbReference type="InterPro" id="IPR038763">
    <property type="entry name" value="DHH_sf"/>
</dbReference>
<dbReference type="InterPro" id="IPR004097">
    <property type="entry name" value="DHHA2"/>
</dbReference>
<dbReference type="InterPro" id="IPR038222">
    <property type="entry name" value="DHHA2_dom_sf"/>
</dbReference>
<dbReference type="InterPro" id="IPR022934">
    <property type="entry name" value="Mn-dep_inorganic_PyrPase"/>
</dbReference>
<dbReference type="InterPro" id="IPR051319">
    <property type="entry name" value="Oligoribo/pAp-PDE_c-di-AMP_PDE"/>
</dbReference>
<dbReference type="NCBIfam" id="NF003877">
    <property type="entry name" value="PRK05427.1"/>
    <property type="match status" value="1"/>
</dbReference>
<dbReference type="PANTHER" id="PTHR47618">
    <property type="entry name" value="BIFUNCTIONAL OLIGORIBONUCLEASE AND PAP PHOSPHATASE NRNA"/>
    <property type="match status" value="1"/>
</dbReference>
<dbReference type="PANTHER" id="PTHR47618:SF1">
    <property type="entry name" value="BIFUNCTIONAL OLIGORIBONUCLEASE AND PAP PHOSPHATASE NRNA"/>
    <property type="match status" value="1"/>
</dbReference>
<dbReference type="Pfam" id="PF01368">
    <property type="entry name" value="DHH"/>
    <property type="match status" value="1"/>
</dbReference>
<dbReference type="Pfam" id="PF02833">
    <property type="entry name" value="DHHA2"/>
    <property type="match status" value="1"/>
</dbReference>
<dbReference type="SMART" id="SM01131">
    <property type="entry name" value="DHHA2"/>
    <property type="match status" value="1"/>
</dbReference>
<dbReference type="SUPFAM" id="SSF64182">
    <property type="entry name" value="DHH phosphoesterases"/>
    <property type="match status" value="1"/>
</dbReference>